<comment type="function">
    <text evidence="2">Component of the ubiquinol-cytochrome c reductase complex (complex III or cytochrome b-c1 complex) that is part of the mitochondrial respiratory chain. The b-c1 complex mediates electron transfer from ubiquinol to cytochrome c. Contributes to the generation of a proton gradient across the mitochondrial membrane that is then used for ATP synthesis.</text>
</comment>
<comment type="cofactor">
    <cofactor evidence="2">
        <name>heme b</name>
        <dbReference type="ChEBI" id="CHEBI:60344"/>
    </cofactor>
    <text evidence="2">Binds 2 heme b groups non-covalently.</text>
</comment>
<comment type="subunit">
    <text evidence="2">The cytochrome bc1 complex contains 11 subunits: 3 respiratory subunits (MT-CYB, CYC1 and UQCRFS1), 2 core proteins (UQCRC1 and UQCRC2) and 6 low-molecular weight proteins (UQCRH/QCR6, UQCRB/QCR7, UQCRQ/QCR8, UQCR10/QCR9, UQCR11/QCR10 and a cleavage product of UQCRFS1). This cytochrome bc1 complex then forms a dimer.</text>
</comment>
<comment type="subcellular location">
    <subcellularLocation>
        <location evidence="2">Mitochondrion inner membrane</location>
        <topology evidence="2">Multi-pass membrane protein</topology>
    </subcellularLocation>
</comment>
<comment type="miscellaneous">
    <text evidence="1">Heme 1 (or BL or b562) is low-potential and absorbs at about 562 nm, and heme 2 (or BH or b566) is high-potential and absorbs at about 566 nm.</text>
</comment>
<comment type="similarity">
    <text evidence="3 4">Belongs to the cytochrome b family.</text>
</comment>
<comment type="caution">
    <text evidence="2">The full-length protein contains only eight transmembrane helices, not nine as predicted by bioinformatics tools.</text>
</comment>
<feature type="chain" id="PRO_0000255148" description="Cytochrome b">
    <location>
        <begin position="1"/>
        <end position="379"/>
    </location>
</feature>
<feature type="transmembrane region" description="Helical" evidence="2">
    <location>
        <begin position="33"/>
        <end position="53"/>
    </location>
</feature>
<feature type="transmembrane region" description="Helical" evidence="2">
    <location>
        <begin position="77"/>
        <end position="98"/>
    </location>
</feature>
<feature type="transmembrane region" description="Helical" evidence="2">
    <location>
        <begin position="113"/>
        <end position="133"/>
    </location>
</feature>
<feature type="transmembrane region" description="Helical" evidence="2">
    <location>
        <begin position="178"/>
        <end position="198"/>
    </location>
</feature>
<feature type="transmembrane region" description="Helical" evidence="2">
    <location>
        <begin position="226"/>
        <end position="246"/>
    </location>
</feature>
<feature type="transmembrane region" description="Helical" evidence="2">
    <location>
        <begin position="288"/>
        <end position="308"/>
    </location>
</feature>
<feature type="transmembrane region" description="Helical" evidence="2">
    <location>
        <begin position="320"/>
        <end position="340"/>
    </location>
</feature>
<feature type="transmembrane region" description="Helical" evidence="2">
    <location>
        <begin position="347"/>
        <end position="367"/>
    </location>
</feature>
<feature type="binding site" description="axial binding residue" evidence="2">
    <location>
        <position position="83"/>
    </location>
    <ligand>
        <name>heme b</name>
        <dbReference type="ChEBI" id="CHEBI:60344"/>
        <label>b562</label>
    </ligand>
    <ligandPart>
        <name>Fe</name>
        <dbReference type="ChEBI" id="CHEBI:18248"/>
    </ligandPart>
</feature>
<feature type="binding site" description="axial binding residue" evidence="2">
    <location>
        <position position="97"/>
    </location>
    <ligand>
        <name>heme b</name>
        <dbReference type="ChEBI" id="CHEBI:60344"/>
        <label>b566</label>
    </ligand>
    <ligandPart>
        <name>Fe</name>
        <dbReference type="ChEBI" id="CHEBI:18248"/>
    </ligandPart>
</feature>
<feature type="binding site" description="axial binding residue" evidence="2">
    <location>
        <position position="182"/>
    </location>
    <ligand>
        <name>heme b</name>
        <dbReference type="ChEBI" id="CHEBI:60344"/>
        <label>b562</label>
    </ligand>
    <ligandPart>
        <name>Fe</name>
        <dbReference type="ChEBI" id="CHEBI:18248"/>
    </ligandPart>
</feature>
<feature type="binding site" description="axial binding residue" evidence="2">
    <location>
        <position position="196"/>
    </location>
    <ligand>
        <name>heme b</name>
        <dbReference type="ChEBI" id="CHEBI:60344"/>
        <label>b566</label>
    </ligand>
    <ligandPart>
        <name>Fe</name>
        <dbReference type="ChEBI" id="CHEBI:18248"/>
    </ligandPart>
</feature>
<feature type="binding site" evidence="2">
    <location>
        <position position="201"/>
    </location>
    <ligand>
        <name>a ubiquinone</name>
        <dbReference type="ChEBI" id="CHEBI:16389"/>
    </ligand>
</feature>
<accession>Q35966</accession>
<name>CYB_THRAP</name>
<keyword id="KW-0249">Electron transport</keyword>
<keyword id="KW-0349">Heme</keyword>
<keyword id="KW-0408">Iron</keyword>
<keyword id="KW-0472">Membrane</keyword>
<keyword id="KW-0479">Metal-binding</keyword>
<keyword id="KW-0496">Mitochondrion</keyword>
<keyword id="KW-0999">Mitochondrion inner membrane</keyword>
<keyword id="KW-0679">Respiratory chain</keyword>
<keyword id="KW-0812">Transmembrane</keyword>
<keyword id="KW-1133">Transmembrane helix</keyword>
<keyword id="KW-0813">Transport</keyword>
<keyword id="KW-0830">Ubiquinone</keyword>
<proteinExistence type="inferred from homology"/>
<organism>
    <name type="scientific">Thrichomys apereoides</name>
    <name type="common">Punare</name>
    <name type="synonym">Echimys apereoides</name>
    <dbReference type="NCBI Taxonomy" id="43327"/>
    <lineage>
        <taxon>Eukaryota</taxon>
        <taxon>Metazoa</taxon>
        <taxon>Chordata</taxon>
        <taxon>Craniata</taxon>
        <taxon>Vertebrata</taxon>
        <taxon>Euteleostomi</taxon>
        <taxon>Mammalia</taxon>
        <taxon>Eutheria</taxon>
        <taxon>Euarchontoglires</taxon>
        <taxon>Glires</taxon>
        <taxon>Rodentia</taxon>
        <taxon>Hystricomorpha</taxon>
        <taxon>Echimyidae</taxon>
        <taxon>Thrichomys</taxon>
    </lineage>
</organism>
<protein>
    <recommendedName>
        <fullName>Cytochrome b</fullName>
    </recommendedName>
    <alternativeName>
        <fullName>Complex III subunit 3</fullName>
    </alternativeName>
    <alternativeName>
        <fullName>Complex III subunit III</fullName>
    </alternativeName>
    <alternativeName>
        <fullName>Cytochrome b-c1 complex subunit 3</fullName>
    </alternativeName>
    <alternativeName>
        <fullName>Ubiquinol-cytochrome-c reductase complex cytochrome b subunit</fullName>
    </alternativeName>
</protein>
<dbReference type="EMBL" id="U34854">
    <property type="protein sequence ID" value="AAC52563.1"/>
    <property type="molecule type" value="Genomic_DNA"/>
</dbReference>
<dbReference type="GO" id="GO:0005743">
    <property type="term" value="C:mitochondrial inner membrane"/>
    <property type="evidence" value="ECO:0007669"/>
    <property type="project" value="UniProtKB-SubCell"/>
</dbReference>
<dbReference type="GO" id="GO:0045275">
    <property type="term" value="C:respiratory chain complex III"/>
    <property type="evidence" value="ECO:0007669"/>
    <property type="project" value="InterPro"/>
</dbReference>
<dbReference type="GO" id="GO:0046872">
    <property type="term" value="F:metal ion binding"/>
    <property type="evidence" value="ECO:0007669"/>
    <property type="project" value="UniProtKB-KW"/>
</dbReference>
<dbReference type="GO" id="GO:0008121">
    <property type="term" value="F:ubiquinol-cytochrome-c reductase activity"/>
    <property type="evidence" value="ECO:0007669"/>
    <property type="project" value="InterPro"/>
</dbReference>
<dbReference type="GO" id="GO:0006122">
    <property type="term" value="P:mitochondrial electron transport, ubiquinol to cytochrome c"/>
    <property type="evidence" value="ECO:0007669"/>
    <property type="project" value="TreeGrafter"/>
</dbReference>
<dbReference type="CDD" id="cd00290">
    <property type="entry name" value="cytochrome_b_C"/>
    <property type="match status" value="1"/>
</dbReference>
<dbReference type="CDD" id="cd00284">
    <property type="entry name" value="Cytochrome_b_N"/>
    <property type="match status" value="1"/>
</dbReference>
<dbReference type="FunFam" id="1.20.810.10:FF:000002">
    <property type="entry name" value="Cytochrome b"/>
    <property type="match status" value="1"/>
</dbReference>
<dbReference type="Gene3D" id="1.20.810.10">
    <property type="entry name" value="Cytochrome Bc1 Complex, Chain C"/>
    <property type="match status" value="1"/>
</dbReference>
<dbReference type="InterPro" id="IPR005798">
    <property type="entry name" value="Cyt_b/b6_C"/>
</dbReference>
<dbReference type="InterPro" id="IPR036150">
    <property type="entry name" value="Cyt_b/b6_C_sf"/>
</dbReference>
<dbReference type="InterPro" id="IPR005797">
    <property type="entry name" value="Cyt_b/b6_N"/>
</dbReference>
<dbReference type="InterPro" id="IPR027387">
    <property type="entry name" value="Cytb/b6-like_sf"/>
</dbReference>
<dbReference type="InterPro" id="IPR030689">
    <property type="entry name" value="Cytochrome_b"/>
</dbReference>
<dbReference type="InterPro" id="IPR048260">
    <property type="entry name" value="Cytochrome_b_C_euk/bac"/>
</dbReference>
<dbReference type="InterPro" id="IPR048259">
    <property type="entry name" value="Cytochrome_b_N_euk/bac"/>
</dbReference>
<dbReference type="InterPro" id="IPR016174">
    <property type="entry name" value="Di-haem_cyt_TM"/>
</dbReference>
<dbReference type="PANTHER" id="PTHR19271">
    <property type="entry name" value="CYTOCHROME B"/>
    <property type="match status" value="1"/>
</dbReference>
<dbReference type="PANTHER" id="PTHR19271:SF16">
    <property type="entry name" value="CYTOCHROME B"/>
    <property type="match status" value="1"/>
</dbReference>
<dbReference type="Pfam" id="PF00032">
    <property type="entry name" value="Cytochrom_B_C"/>
    <property type="match status" value="1"/>
</dbReference>
<dbReference type="Pfam" id="PF00033">
    <property type="entry name" value="Cytochrome_B"/>
    <property type="match status" value="1"/>
</dbReference>
<dbReference type="PIRSF" id="PIRSF038885">
    <property type="entry name" value="COB"/>
    <property type="match status" value="1"/>
</dbReference>
<dbReference type="SUPFAM" id="SSF81648">
    <property type="entry name" value="a domain/subunit of cytochrome bc1 complex (Ubiquinol-cytochrome c reductase)"/>
    <property type="match status" value="1"/>
</dbReference>
<dbReference type="SUPFAM" id="SSF81342">
    <property type="entry name" value="Transmembrane di-heme cytochromes"/>
    <property type="match status" value="1"/>
</dbReference>
<dbReference type="PROSITE" id="PS51003">
    <property type="entry name" value="CYTB_CTER"/>
    <property type="match status" value="1"/>
</dbReference>
<dbReference type="PROSITE" id="PS51002">
    <property type="entry name" value="CYTB_NTER"/>
    <property type="match status" value="1"/>
</dbReference>
<evidence type="ECO:0000250" key="1"/>
<evidence type="ECO:0000250" key="2">
    <source>
        <dbReference type="UniProtKB" id="P00157"/>
    </source>
</evidence>
<evidence type="ECO:0000255" key="3">
    <source>
        <dbReference type="PROSITE-ProRule" id="PRU00967"/>
    </source>
</evidence>
<evidence type="ECO:0000255" key="4">
    <source>
        <dbReference type="PROSITE-ProRule" id="PRU00968"/>
    </source>
</evidence>
<reference key="1">
    <citation type="journal article" date="1996" name="Mol. Phylogenet. Evol.">
        <title>The simultaneous diversification of South American echimyid rodents (Hystricognathi) based on complete cytochrome b sequences.</title>
        <authorList>
            <person name="Lara M.C."/>
            <person name="Patton J.L."/>
            <person name="da Silva M.N.F."/>
        </authorList>
    </citation>
    <scope>NUCLEOTIDE SEQUENCE [GENOMIC DNA]</scope>
</reference>
<geneLocation type="mitochondrion"/>
<gene>
    <name type="primary">MT-CYB</name>
    <name type="synonym">COB</name>
    <name type="synonym">CYTB</name>
    <name type="synonym">MTCYB</name>
</gene>
<sequence>MTNMRKSHPLIKIINHSFIDLPAPSNISAWWNFGSLLGVCLALQIITGLFLAMHYTADTTTAFSSVTHICRDVNYGWLIRYAHANGASMFFIFLYFHIGRGIYYGSYSFMETWNMGVILIITVMATAFMGYXLPWGQMSFWGATVITNLLSAIPYIGPTLVEWIWGXFSVDKATLTRFFAFHFILPFIITALVAIHLLFLHETGSNNPSGLNSNSDKIPFHPYYTIKDILGLLLMLLTLLSLTLFSPDLLGDPDNYTPANPLNTPPHIKPEWYFLFAYAILRSIPNKLGGVLALVFSILILTLFPALHTSKQRSMTFRPLSQCLLWLLVANLIILTWIGGQPVEPPFISIGQLASISYFCIILILMPTTSLMENKLLKW</sequence>